<comment type="function">
    <molecule>Pancreatic polypeptide</molecule>
    <text evidence="2">Hormone secreted by pancreatic cells that acts as a regulator of pancreatic and gastrointestinal functions probably by signaling through the G protein-coupled receptor NPY4R2.</text>
</comment>
<comment type="subcellular location">
    <subcellularLocation>
        <location evidence="2">Secreted</location>
    </subcellularLocation>
</comment>
<comment type="induction">
    <text evidence="3">Induced in hypoglycemia, and, in vitro, by carbocal, in fetal pancreatic cells.</text>
</comment>
<comment type="miscellaneous">
    <text>May be used as a marker of the viability of xenotransplanted fetal panreatic tissue in the immediate post-transplant period.</text>
</comment>
<comment type="similarity">
    <text evidence="5">Belongs to the NPY family.</text>
</comment>
<protein>
    <recommendedName>
        <fullName evidence="5">Pancreatic polypeptide prohormone</fullName>
    </recommendedName>
    <component>
        <recommendedName>
            <fullName evidence="4">Pancreatic polypeptide</fullName>
            <shortName evidence="4">PP</shortName>
        </recommendedName>
    </component>
    <component>
        <recommendedName>
            <fullName evidence="4">Pancreatic icosapeptide</fullName>
            <shortName evidence="4">PI</shortName>
        </recommendedName>
    </component>
</protein>
<reference key="1">
    <citation type="book" date="1979" name="Proinsulin, insulin, c-peptide">
        <editorList>
            <person name="Baba S."/>
            <person name="Kaneko T."/>
            <person name="Yanaihara N."/>
        </editorList>
        <authorList>
            <person name="Chance R.E."/>
            <person name="Johnson M.G."/>
            <person name="Hoffmann J.A."/>
            <person name="Lin T.-M."/>
        </authorList>
    </citation>
    <scope>PROTEIN SEQUENCE OF 1-36</scope>
</reference>
<reference key="2">
    <citation type="journal article" date="2001" name="Endocrinology">
        <title>Secretion of pancreatic icosapeptide from porcine pancreas.</title>
        <authorList>
            <person name="Amaratunga A."/>
            <person name="Tuch B.E."/>
            <person name="Han X.-G."/>
            <person name="Georges P."/>
            <person name="Dean S.K."/>
            <person name="Scott H."/>
        </authorList>
    </citation>
    <scope>NUCLEOTIDE SEQUENCE [MRNA] OF 7-65</scope>
    <scope>INDUCTION</scope>
</reference>
<keyword id="KW-0027">Amidation</keyword>
<keyword id="KW-0903">Direct protein sequencing</keyword>
<keyword id="KW-0372">Hormone</keyword>
<keyword id="KW-1185">Reference proteome</keyword>
<keyword id="KW-0964">Secreted</keyword>
<name>PAHO_PIG</name>
<dbReference type="EMBL" id="AF203915">
    <property type="protein sequence ID" value="AAG35647.1"/>
    <property type="molecule type" value="mRNA"/>
</dbReference>
<dbReference type="PIR" id="A01568">
    <property type="entry name" value="PCPG"/>
</dbReference>
<dbReference type="SMR" id="P01300"/>
<dbReference type="STRING" id="9823.ENSSSCP00000018403"/>
<dbReference type="PaxDb" id="9823-ENSSSCP00000018403"/>
<dbReference type="eggNOG" id="ENOG502TD4B">
    <property type="taxonomic scope" value="Eukaryota"/>
</dbReference>
<dbReference type="HOGENOM" id="CLU_165150_1_0_1"/>
<dbReference type="InParanoid" id="P01300"/>
<dbReference type="Proteomes" id="UP000008227">
    <property type="component" value="Unplaced"/>
</dbReference>
<dbReference type="Proteomes" id="UP000314985">
    <property type="component" value="Unplaced"/>
</dbReference>
<dbReference type="Proteomes" id="UP000694570">
    <property type="component" value="Unplaced"/>
</dbReference>
<dbReference type="Proteomes" id="UP000694571">
    <property type="component" value="Unplaced"/>
</dbReference>
<dbReference type="Proteomes" id="UP000694720">
    <property type="component" value="Unplaced"/>
</dbReference>
<dbReference type="Proteomes" id="UP000694722">
    <property type="component" value="Unplaced"/>
</dbReference>
<dbReference type="Proteomes" id="UP000694723">
    <property type="component" value="Unplaced"/>
</dbReference>
<dbReference type="Proteomes" id="UP000694724">
    <property type="component" value="Unplaced"/>
</dbReference>
<dbReference type="Proteomes" id="UP000694725">
    <property type="component" value="Unplaced"/>
</dbReference>
<dbReference type="Proteomes" id="UP000694726">
    <property type="component" value="Unplaced"/>
</dbReference>
<dbReference type="Proteomes" id="UP000694727">
    <property type="component" value="Unplaced"/>
</dbReference>
<dbReference type="Proteomes" id="UP000694728">
    <property type="component" value="Unplaced"/>
</dbReference>
<dbReference type="GO" id="GO:0005615">
    <property type="term" value="C:extracellular space"/>
    <property type="evidence" value="ECO:0000318"/>
    <property type="project" value="GO_Central"/>
</dbReference>
<dbReference type="GO" id="GO:0005184">
    <property type="term" value="F:neuropeptide hormone activity"/>
    <property type="evidence" value="ECO:0000318"/>
    <property type="project" value="GO_Central"/>
</dbReference>
<dbReference type="GO" id="GO:0031841">
    <property type="term" value="F:neuropeptide Y receptor binding"/>
    <property type="evidence" value="ECO:0000318"/>
    <property type="project" value="GO_Central"/>
</dbReference>
<dbReference type="GO" id="GO:0007631">
    <property type="term" value="P:feeding behavior"/>
    <property type="evidence" value="ECO:0000318"/>
    <property type="project" value="GO_Central"/>
</dbReference>
<dbReference type="GO" id="GO:0007218">
    <property type="term" value="P:neuropeptide signaling pathway"/>
    <property type="evidence" value="ECO:0000318"/>
    <property type="project" value="GO_Central"/>
</dbReference>
<dbReference type="CDD" id="cd00126">
    <property type="entry name" value="PAH"/>
    <property type="match status" value="1"/>
</dbReference>
<dbReference type="Gene3D" id="6.10.250.900">
    <property type="match status" value="1"/>
</dbReference>
<dbReference type="InterPro" id="IPR001955">
    <property type="entry name" value="Pancreatic_hormone-like"/>
</dbReference>
<dbReference type="InterPro" id="IPR020392">
    <property type="entry name" value="Pancreatic_hormone-like_CS"/>
</dbReference>
<dbReference type="PANTHER" id="PTHR10533">
    <property type="entry name" value="NEUROPEPTIDE Y/PANCREATIC HORMONE/PEPTIDE YY"/>
    <property type="match status" value="1"/>
</dbReference>
<dbReference type="PANTHER" id="PTHR10533:SF2">
    <property type="entry name" value="PANCREATIC POLYPEPTIDE PROHORMONE"/>
    <property type="match status" value="1"/>
</dbReference>
<dbReference type="Pfam" id="PF00159">
    <property type="entry name" value="Hormone_3"/>
    <property type="match status" value="1"/>
</dbReference>
<dbReference type="PRINTS" id="PR00278">
    <property type="entry name" value="PANCHORMONE"/>
</dbReference>
<dbReference type="SMART" id="SM00309">
    <property type="entry name" value="PAH"/>
    <property type="match status" value="1"/>
</dbReference>
<dbReference type="PROSITE" id="PS00265">
    <property type="entry name" value="PANCREATIC_HORMONE_1"/>
    <property type="match status" value="1"/>
</dbReference>
<dbReference type="PROSITE" id="PS50276">
    <property type="entry name" value="PANCREATIC_HORMONE_2"/>
    <property type="match status" value="1"/>
</dbReference>
<organism>
    <name type="scientific">Sus scrofa</name>
    <name type="common">Pig</name>
    <dbReference type="NCBI Taxonomy" id="9823"/>
    <lineage>
        <taxon>Eukaryota</taxon>
        <taxon>Metazoa</taxon>
        <taxon>Chordata</taxon>
        <taxon>Craniata</taxon>
        <taxon>Vertebrata</taxon>
        <taxon>Euteleostomi</taxon>
        <taxon>Mammalia</taxon>
        <taxon>Eutheria</taxon>
        <taxon>Laurasiatheria</taxon>
        <taxon>Artiodactyla</taxon>
        <taxon>Suina</taxon>
        <taxon>Suidae</taxon>
        <taxon>Sus</taxon>
    </lineage>
</organism>
<feature type="peptide" id="PRO_0000025370" description="Pancreatic polypeptide">
    <location>
        <begin position="1"/>
        <end position="36"/>
    </location>
</feature>
<feature type="peptide" id="PRO_0000025371" description="Pancreatic icosapeptide">
    <location>
        <begin position="40"/>
        <end position="58"/>
    </location>
</feature>
<feature type="propeptide" id="PRO_0000292864">
    <location>
        <begin position="59"/>
        <end position="65" status="greater than"/>
    </location>
</feature>
<feature type="modified residue" description="Tyrosine amide" evidence="1">
    <location>
        <position position="36"/>
    </location>
</feature>
<feature type="non-terminal residue">
    <location>
        <position position="1"/>
    </location>
</feature>
<feature type="non-terminal residue">
    <location>
        <position position="65"/>
    </location>
</feature>
<proteinExistence type="evidence at protein level"/>
<gene>
    <name type="primary">PPY</name>
</gene>
<sequence>APLEPVYPGDDATPEQMAQYAAELRRYINMLTRPRYGKRDEEDLLDLKCSSLHAAAPRELSPMGA</sequence>
<evidence type="ECO:0000250" key="1"/>
<evidence type="ECO:0000250" key="2">
    <source>
        <dbReference type="UniProtKB" id="P01298"/>
    </source>
</evidence>
<evidence type="ECO:0000269" key="3">
    <source>
    </source>
</evidence>
<evidence type="ECO:0000303" key="4">
    <source>
    </source>
</evidence>
<evidence type="ECO:0000305" key="5"/>
<accession>P01300</accession>
<accession>Q9GKL0</accession>